<sequence>MSVQSAIKRKTAPEIRARKGGDPVVMLTSYHAHTAALVDRYCDVILVGDSLGNVMHGFETTVPVTLDMMILQGRAVMRGSKEALVVVDMPFGSYEASKEQAFHSAVRIMKESLCGAVKLEGGVKMAETIRFLSERGVPVMGHIGLTPQSINTLGSFRAQGREESNWAPIEADARAVAEAGAFSVVIEAVAEPLARKITADIAIPTIGIGASAACDGQVLVLEDMLGLSPWAPKFVKRFGDLGPGIEAAIKDYADEVRSRAFPGPEHVYGMKAKS</sequence>
<dbReference type="EC" id="2.1.2.11" evidence="1"/>
<dbReference type="EMBL" id="CP000301">
    <property type="protein sequence ID" value="ABD87830.1"/>
    <property type="molecule type" value="Genomic_DNA"/>
</dbReference>
<dbReference type="SMR" id="Q215V6"/>
<dbReference type="STRING" id="316056.RPC_2276"/>
<dbReference type="KEGG" id="rpc:RPC_2276"/>
<dbReference type="eggNOG" id="COG0413">
    <property type="taxonomic scope" value="Bacteria"/>
</dbReference>
<dbReference type="HOGENOM" id="CLU_036645_1_0_5"/>
<dbReference type="OrthoDB" id="9781789at2"/>
<dbReference type="UniPathway" id="UPA00028">
    <property type="reaction ID" value="UER00003"/>
</dbReference>
<dbReference type="GO" id="GO:0005737">
    <property type="term" value="C:cytoplasm"/>
    <property type="evidence" value="ECO:0007669"/>
    <property type="project" value="UniProtKB-SubCell"/>
</dbReference>
<dbReference type="GO" id="GO:0003864">
    <property type="term" value="F:3-methyl-2-oxobutanoate hydroxymethyltransferase activity"/>
    <property type="evidence" value="ECO:0007669"/>
    <property type="project" value="UniProtKB-UniRule"/>
</dbReference>
<dbReference type="GO" id="GO:0000287">
    <property type="term" value="F:magnesium ion binding"/>
    <property type="evidence" value="ECO:0007669"/>
    <property type="project" value="TreeGrafter"/>
</dbReference>
<dbReference type="GO" id="GO:0015940">
    <property type="term" value="P:pantothenate biosynthetic process"/>
    <property type="evidence" value="ECO:0007669"/>
    <property type="project" value="UniProtKB-UniRule"/>
</dbReference>
<dbReference type="CDD" id="cd06557">
    <property type="entry name" value="KPHMT-like"/>
    <property type="match status" value="1"/>
</dbReference>
<dbReference type="FunFam" id="3.20.20.60:FF:000003">
    <property type="entry name" value="3-methyl-2-oxobutanoate hydroxymethyltransferase"/>
    <property type="match status" value="1"/>
</dbReference>
<dbReference type="Gene3D" id="3.20.20.60">
    <property type="entry name" value="Phosphoenolpyruvate-binding domains"/>
    <property type="match status" value="1"/>
</dbReference>
<dbReference type="HAMAP" id="MF_00156">
    <property type="entry name" value="PanB"/>
    <property type="match status" value="1"/>
</dbReference>
<dbReference type="InterPro" id="IPR003700">
    <property type="entry name" value="Pantoate_hydroxy_MeTrfase"/>
</dbReference>
<dbReference type="InterPro" id="IPR015813">
    <property type="entry name" value="Pyrv/PenolPyrv_kinase-like_dom"/>
</dbReference>
<dbReference type="InterPro" id="IPR040442">
    <property type="entry name" value="Pyrv_kinase-like_dom_sf"/>
</dbReference>
<dbReference type="NCBIfam" id="TIGR00222">
    <property type="entry name" value="panB"/>
    <property type="match status" value="1"/>
</dbReference>
<dbReference type="NCBIfam" id="NF001452">
    <property type="entry name" value="PRK00311.1"/>
    <property type="match status" value="1"/>
</dbReference>
<dbReference type="PANTHER" id="PTHR20881">
    <property type="entry name" value="3-METHYL-2-OXOBUTANOATE HYDROXYMETHYLTRANSFERASE"/>
    <property type="match status" value="1"/>
</dbReference>
<dbReference type="PANTHER" id="PTHR20881:SF0">
    <property type="entry name" value="3-METHYL-2-OXOBUTANOATE HYDROXYMETHYLTRANSFERASE"/>
    <property type="match status" value="1"/>
</dbReference>
<dbReference type="Pfam" id="PF02548">
    <property type="entry name" value="Pantoate_transf"/>
    <property type="match status" value="1"/>
</dbReference>
<dbReference type="PIRSF" id="PIRSF000388">
    <property type="entry name" value="Pantoate_hydroxy_MeTrfase"/>
    <property type="match status" value="1"/>
</dbReference>
<dbReference type="SUPFAM" id="SSF51621">
    <property type="entry name" value="Phosphoenolpyruvate/pyruvate domain"/>
    <property type="match status" value="1"/>
</dbReference>
<proteinExistence type="inferred from homology"/>
<keyword id="KW-0963">Cytoplasm</keyword>
<keyword id="KW-0460">Magnesium</keyword>
<keyword id="KW-0479">Metal-binding</keyword>
<keyword id="KW-0566">Pantothenate biosynthesis</keyword>
<keyword id="KW-0808">Transferase</keyword>
<feature type="chain" id="PRO_0000297356" description="3-methyl-2-oxobutanoate hydroxymethyltransferase">
    <location>
        <begin position="1"/>
        <end position="274"/>
    </location>
</feature>
<feature type="active site" description="Proton acceptor" evidence="1">
    <location>
        <position position="187"/>
    </location>
</feature>
<feature type="binding site" evidence="1">
    <location>
        <begin position="49"/>
        <end position="50"/>
    </location>
    <ligand>
        <name>3-methyl-2-oxobutanoate</name>
        <dbReference type="ChEBI" id="CHEBI:11851"/>
    </ligand>
</feature>
<feature type="binding site" evidence="1">
    <location>
        <position position="49"/>
    </location>
    <ligand>
        <name>Mg(2+)</name>
        <dbReference type="ChEBI" id="CHEBI:18420"/>
    </ligand>
</feature>
<feature type="binding site" evidence="1">
    <location>
        <position position="88"/>
    </location>
    <ligand>
        <name>3-methyl-2-oxobutanoate</name>
        <dbReference type="ChEBI" id="CHEBI:11851"/>
    </ligand>
</feature>
<feature type="binding site" evidence="1">
    <location>
        <position position="88"/>
    </location>
    <ligand>
        <name>Mg(2+)</name>
        <dbReference type="ChEBI" id="CHEBI:18420"/>
    </ligand>
</feature>
<feature type="binding site" evidence="1">
    <location>
        <position position="118"/>
    </location>
    <ligand>
        <name>3-methyl-2-oxobutanoate</name>
        <dbReference type="ChEBI" id="CHEBI:11851"/>
    </ligand>
</feature>
<feature type="binding site" evidence="1">
    <location>
        <position position="120"/>
    </location>
    <ligand>
        <name>Mg(2+)</name>
        <dbReference type="ChEBI" id="CHEBI:18420"/>
    </ligand>
</feature>
<gene>
    <name evidence="1" type="primary">panB</name>
    <name type="ordered locus">RPC_2276</name>
</gene>
<evidence type="ECO:0000255" key="1">
    <source>
        <dbReference type="HAMAP-Rule" id="MF_00156"/>
    </source>
</evidence>
<reference key="1">
    <citation type="submission" date="2006-03" db="EMBL/GenBank/DDBJ databases">
        <title>Complete sequence of Rhodopseudomonas palustris BisB18.</title>
        <authorList>
            <consortium name="US DOE Joint Genome Institute"/>
            <person name="Copeland A."/>
            <person name="Lucas S."/>
            <person name="Lapidus A."/>
            <person name="Barry K."/>
            <person name="Detter J.C."/>
            <person name="Glavina del Rio T."/>
            <person name="Hammon N."/>
            <person name="Israni S."/>
            <person name="Dalin E."/>
            <person name="Tice H."/>
            <person name="Pitluck S."/>
            <person name="Chain P."/>
            <person name="Malfatti S."/>
            <person name="Shin M."/>
            <person name="Vergez L."/>
            <person name="Schmutz J."/>
            <person name="Larimer F."/>
            <person name="Land M."/>
            <person name="Hauser L."/>
            <person name="Pelletier D.A."/>
            <person name="Kyrpides N."/>
            <person name="Anderson I."/>
            <person name="Oda Y."/>
            <person name="Harwood C.S."/>
            <person name="Richardson P."/>
        </authorList>
    </citation>
    <scope>NUCLEOTIDE SEQUENCE [LARGE SCALE GENOMIC DNA]</scope>
    <source>
        <strain>BisB18</strain>
    </source>
</reference>
<protein>
    <recommendedName>
        <fullName evidence="1">3-methyl-2-oxobutanoate hydroxymethyltransferase</fullName>
        <ecNumber evidence="1">2.1.2.11</ecNumber>
    </recommendedName>
    <alternativeName>
        <fullName evidence="1">Ketopantoate hydroxymethyltransferase</fullName>
        <shortName evidence="1">KPHMT</shortName>
    </alternativeName>
</protein>
<name>PANB_RHOPB</name>
<accession>Q215V6</accession>
<comment type="function">
    <text evidence="1">Catalyzes the reversible reaction in which hydroxymethyl group from 5,10-methylenetetrahydrofolate is transferred onto alpha-ketoisovalerate to form ketopantoate.</text>
</comment>
<comment type="catalytic activity">
    <reaction evidence="1">
        <text>3-methyl-2-oxobutanoate + (6R)-5,10-methylene-5,6,7,8-tetrahydrofolate + H2O = 2-dehydropantoate + (6S)-5,6,7,8-tetrahydrofolate</text>
        <dbReference type="Rhea" id="RHEA:11824"/>
        <dbReference type="ChEBI" id="CHEBI:11561"/>
        <dbReference type="ChEBI" id="CHEBI:11851"/>
        <dbReference type="ChEBI" id="CHEBI:15377"/>
        <dbReference type="ChEBI" id="CHEBI:15636"/>
        <dbReference type="ChEBI" id="CHEBI:57453"/>
        <dbReference type="EC" id="2.1.2.11"/>
    </reaction>
</comment>
<comment type="cofactor">
    <cofactor evidence="1">
        <name>Mg(2+)</name>
        <dbReference type="ChEBI" id="CHEBI:18420"/>
    </cofactor>
    <text evidence="1">Binds 1 Mg(2+) ion per subunit.</text>
</comment>
<comment type="pathway">
    <text evidence="1">Cofactor biosynthesis; (R)-pantothenate biosynthesis; (R)-pantoate from 3-methyl-2-oxobutanoate: step 1/2.</text>
</comment>
<comment type="subunit">
    <text evidence="1">Homodecamer; pentamer of dimers.</text>
</comment>
<comment type="subcellular location">
    <subcellularLocation>
        <location evidence="1">Cytoplasm</location>
    </subcellularLocation>
</comment>
<comment type="similarity">
    <text evidence="1">Belongs to the PanB family.</text>
</comment>
<organism>
    <name type="scientific">Rhodopseudomonas palustris (strain BisB18)</name>
    <dbReference type="NCBI Taxonomy" id="316056"/>
    <lineage>
        <taxon>Bacteria</taxon>
        <taxon>Pseudomonadati</taxon>
        <taxon>Pseudomonadota</taxon>
        <taxon>Alphaproteobacteria</taxon>
        <taxon>Hyphomicrobiales</taxon>
        <taxon>Nitrobacteraceae</taxon>
        <taxon>Rhodopseudomonas</taxon>
    </lineage>
</organism>